<comment type="function">
    <text evidence="1">Involved in the biosynthesis of isopentenyl diphosphate (IPP) and dimethylallyl diphosphate (DMAPP), two major building blocks of isoprenoid compounds. Catalyzes the conversion of 4-diphosphocytidyl-2-C-methyl-D-erythritol 2-phosphate (CDP-ME2P) to 2-C-methyl-D-erythritol 2,4-cyclodiphosphate (ME-CPP) with a corresponding release of cytidine 5-monophosphate (CMP).</text>
</comment>
<comment type="catalytic activity">
    <reaction evidence="1">
        <text>4-CDP-2-C-methyl-D-erythritol 2-phosphate = 2-C-methyl-D-erythritol 2,4-cyclic diphosphate + CMP</text>
        <dbReference type="Rhea" id="RHEA:23864"/>
        <dbReference type="ChEBI" id="CHEBI:57919"/>
        <dbReference type="ChEBI" id="CHEBI:58483"/>
        <dbReference type="ChEBI" id="CHEBI:60377"/>
        <dbReference type="EC" id="4.6.1.12"/>
    </reaction>
</comment>
<comment type="cofactor">
    <cofactor evidence="1">
        <name>a divalent metal cation</name>
        <dbReference type="ChEBI" id="CHEBI:60240"/>
    </cofactor>
    <text evidence="1">Binds 1 divalent metal cation per subunit.</text>
</comment>
<comment type="pathway">
    <text evidence="1">Isoprenoid biosynthesis; isopentenyl diphosphate biosynthesis via DXP pathway; isopentenyl diphosphate from 1-deoxy-D-xylulose 5-phosphate: step 4/6.</text>
</comment>
<comment type="subunit">
    <text evidence="1">Homotrimer.</text>
</comment>
<comment type="similarity">
    <text evidence="1">Belongs to the IspF family.</text>
</comment>
<keyword id="KW-0414">Isoprene biosynthesis</keyword>
<keyword id="KW-0456">Lyase</keyword>
<keyword id="KW-0479">Metal-binding</keyword>
<keyword id="KW-1185">Reference proteome</keyword>
<organism>
    <name type="scientific">Buchnera aphidicola subsp. Acyrthosiphon pisum (strain APS)</name>
    <name type="common">Acyrthosiphon pisum symbiotic bacterium</name>
    <dbReference type="NCBI Taxonomy" id="107806"/>
    <lineage>
        <taxon>Bacteria</taxon>
        <taxon>Pseudomonadati</taxon>
        <taxon>Pseudomonadota</taxon>
        <taxon>Gammaproteobacteria</taxon>
        <taxon>Enterobacterales</taxon>
        <taxon>Erwiniaceae</taxon>
        <taxon>Buchnera</taxon>
    </lineage>
</organism>
<proteinExistence type="inferred from homology"/>
<sequence length="161" mass="17920">MRIGYGFDLHAFGSTKPLIIGGVLIPCEKGLIAHSNGDLLIHSLIDALLGATAMGDIGSFFPSNNYIYKNIDSRILLKKIWNKIILLNYDICNIDITIIAEYPKMLPYIFFMRSNLSLDLNTEIDNISIKSTTSKKIGCIGRKEAIACHSIVMLIKNKKCI</sequence>
<evidence type="ECO:0000255" key="1">
    <source>
        <dbReference type="HAMAP-Rule" id="MF_00107"/>
    </source>
</evidence>
<reference key="1">
    <citation type="journal article" date="2000" name="Nature">
        <title>Genome sequence of the endocellular bacterial symbiont of aphids Buchnera sp. APS.</title>
        <authorList>
            <person name="Shigenobu S."/>
            <person name="Watanabe H."/>
            <person name="Hattori M."/>
            <person name="Sakaki Y."/>
            <person name="Ishikawa H."/>
        </authorList>
    </citation>
    <scope>NUCLEOTIDE SEQUENCE [LARGE SCALE GENOMIC DNA]</scope>
    <source>
        <strain>APS</strain>
    </source>
</reference>
<protein>
    <recommendedName>
        <fullName evidence="1">2-C-methyl-D-erythritol 2,4-cyclodiphosphate synthase</fullName>
        <shortName evidence="1">MECDP-synthase</shortName>
        <shortName evidence="1">MECPP-synthase</shortName>
        <shortName evidence="1">MECPS</shortName>
        <ecNumber evidence="1">4.6.1.12</ecNumber>
    </recommendedName>
</protein>
<name>ISPF_BUCAI</name>
<feature type="chain" id="PRO_0000189447" description="2-C-methyl-D-erythritol 2,4-cyclodiphosphate synthase">
    <location>
        <begin position="1"/>
        <end position="161"/>
    </location>
</feature>
<feature type="binding site" evidence="1">
    <location>
        <begin position="8"/>
        <end position="10"/>
    </location>
    <ligand>
        <name>4-CDP-2-C-methyl-D-erythritol 2-phosphate</name>
        <dbReference type="ChEBI" id="CHEBI:57919"/>
    </ligand>
</feature>
<feature type="binding site" evidence="1">
    <location>
        <position position="8"/>
    </location>
    <ligand>
        <name>a divalent metal cation</name>
        <dbReference type="ChEBI" id="CHEBI:60240"/>
    </ligand>
</feature>
<feature type="binding site" evidence="1">
    <location>
        <position position="10"/>
    </location>
    <ligand>
        <name>a divalent metal cation</name>
        <dbReference type="ChEBI" id="CHEBI:60240"/>
    </ligand>
</feature>
<feature type="binding site" evidence="1">
    <location>
        <begin position="34"/>
        <end position="35"/>
    </location>
    <ligand>
        <name>4-CDP-2-C-methyl-D-erythritol 2-phosphate</name>
        <dbReference type="ChEBI" id="CHEBI:57919"/>
    </ligand>
</feature>
<feature type="binding site" evidence="1">
    <location>
        <position position="42"/>
    </location>
    <ligand>
        <name>a divalent metal cation</name>
        <dbReference type="ChEBI" id="CHEBI:60240"/>
    </ligand>
</feature>
<feature type="binding site" evidence="1">
    <location>
        <begin position="56"/>
        <end position="58"/>
    </location>
    <ligand>
        <name>4-CDP-2-C-methyl-D-erythritol 2-phosphate</name>
        <dbReference type="ChEBI" id="CHEBI:57919"/>
    </ligand>
</feature>
<feature type="binding site" evidence="1">
    <location>
        <begin position="100"/>
        <end position="106"/>
    </location>
    <ligand>
        <name>4-CDP-2-C-methyl-D-erythritol 2-phosphate</name>
        <dbReference type="ChEBI" id="CHEBI:57919"/>
    </ligand>
</feature>
<feature type="binding site" evidence="1">
    <location>
        <position position="142"/>
    </location>
    <ligand>
        <name>4-CDP-2-C-methyl-D-erythritol 2-phosphate</name>
        <dbReference type="ChEBI" id="CHEBI:57919"/>
    </ligand>
</feature>
<feature type="site" description="Transition state stabilizer" evidence="1">
    <location>
        <position position="34"/>
    </location>
</feature>
<feature type="site" description="Transition state stabilizer" evidence="1">
    <location>
        <position position="133"/>
    </location>
</feature>
<dbReference type="EC" id="4.6.1.12" evidence="1"/>
<dbReference type="EMBL" id="BA000003">
    <property type="protein sequence ID" value="BAB13117.1"/>
    <property type="molecule type" value="Genomic_DNA"/>
</dbReference>
<dbReference type="RefSeq" id="NP_240231.1">
    <property type="nucleotide sequence ID" value="NC_002528.1"/>
</dbReference>
<dbReference type="RefSeq" id="WP_009874372.1">
    <property type="nucleotide sequence ID" value="NZ_AP036055.1"/>
</dbReference>
<dbReference type="SMR" id="P57494"/>
<dbReference type="STRING" id="563178.BUAP5A_412"/>
<dbReference type="EnsemblBacteria" id="BAB13117">
    <property type="protein sequence ID" value="BAB13117"/>
    <property type="gene ID" value="BAB13117"/>
</dbReference>
<dbReference type="KEGG" id="buc:BU419"/>
<dbReference type="PATRIC" id="fig|107806.10.peg.428"/>
<dbReference type="eggNOG" id="COG0245">
    <property type="taxonomic scope" value="Bacteria"/>
</dbReference>
<dbReference type="HOGENOM" id="CLU_084630_2_0_6"/>
<dbReference type="UniPathway" id="UPA00056">
    <property type="reaction ID" value="UER00095"/>
</dbReference>
<dbReference type="Proteomes" id="UP000001806">
    <property type="component" value="Chromosome"/>
</dbReference>
<dbReference type="GO" id="GO:0008685">
    <property type="term" value="F:2-C-methyl-D-erythritol 2,4-cyclodiphosphate synthase activity"/>
    <property type="evidence" value="ECO:0007669"/>
    <property type="project" value="UniProtKB-UniRule"/>
</dbReference>
<dbReference type="GO" id="GO:0046872">
    <property type="term" value="F:metal ion binding"/>
    <property type="evidence" value="ECO:0007669"/>
    <property type="project" value="UniProtKB-KW"/>
</dbReference>
<dbReference type="GO" id="GO:0019288">
    <property type="term" value="P:isopentenyl diphosphate biosynthetic process, methylerythritol 4-phosphate pathway"/>
    <property type="evidence" value="ECO:0007669"/>
    <property type="project" value="UniProtKB-UniRule"/>
</dbReference>
<dbReference type="GO" id="GO:0016114">
    <property type="term" value="P:terpenoid biosynthetic process"/>
    <property type="evidence" value="ECO:0007669"/>
    <property type="project" value="InterPro"/>
</dbReference>
<dbReference type="CDD" id="cd00554">
    <property type="entry name" value="MECDP_synthase"/>
    <property type="match status" value="1"/>
</dbReference>
<dbReference type="Gene3D" id="3.30.1330.50">
    <property type="entry name" value="2-C-methyl-D-erythritol 2,4-cyclodiphosphate synthase"/>
    <property type="match status" value="1"/>
</dbReference>
<dbReference type="HAMAP" id="MF_00107">
    <property type="entry name" value="IspF"/>
    <property type="match status" value="1"/>
</dbReference>
<dbReference type="InterPro" id="IPR003526">
    <property type="entry name" value="MECDP_synthase"/>
</dbReference>
<dbReference type="InterPro" id="IPR020555">
    <property type="entry name" value="MECDP_synthase_CS"/>
</dbReference>
<dbReference type="InterPro" id="IPR036571">
    <property type="entry name" value="MECDP_synthase_sf"/>
</dbReference>
<dbReference type="NCBIfam" id="TIGR00151">
    <property type="entry name" value="ispF"/>
    <property type="match status" value="1"/>
</dbReference>
<dbReference type="PANTHER" id="PTHR43181">
    <property type="entry name" value="2-C-METHYL-D-ERYTHRITOL 2,4-CYCLODIPHOSPHATE SYNTHASE, CHLOROPLASTIC"/>
    <property type="match status" value="1"/>
</dbReference>
<dbReference type="PANTHER" id="PTHR43181:SF1">
    <property type="entry name" value="2-C-METHYL-D-ERYTHRITOL 2,4-CYCLODIPHOSPHATE SYNTHASE, CHLOROPLASTIC"/>
    <property type="match status" value="1"/>
</dbReference>
<dbReference type="Pfam" id="PF02542">
    <property type="entry name" value="YgbB"/>
    <property type="match status" value="1"/>
</dbReference>
<dbReference type="SUPFAM" id="SSF69765">
    <property type="entry name" value="IpsF-like"/>
    <property type="match status" value="1"/>
</dbReference>
<dbReference type="PROSITE" id="PS01350">
    <property type="entry name" value="ISPF"/>
    <property type="match status" value="1"/>
</dbReference>
<accession>P57494</accession>
<gene>
    <name evidence="1" type="primary">ispF</name>
    <name type="ordered locus">BU419</name>
</gene>